<sequence>MAKKPTQNFETTLQELESIVNHLEAGDLPLEQALTEFETAIKLVQQGQQRLQQAEQRIQILLNKDEQAELADYE</sequence>
<proteinExistence type="inferred from homology"/>
<name>EX7S_HAEDU</name>
<organism>
    <name type="scientific">Haemophilus ducreyi (strain 35000HP / ATCC 700724)</name>
    <dbReference type="NCBI Taxonomy" id="233412"/>
    <lineage>
        <taxon>Bacteria</taxon>
        <taxon>Pseudomonadati</taxon>
        <taxon>Pseudomonadota</taxon>
        <taxon>Gammaproteobacteria</taxon>
        <taxon>Pasteurellales</taxon>
        <taxon>Pasteurellaceae</taxon>
        <taxon>Haemophilus</taxon>
    </lineage>
</organism>
<keyword id="KW-0963">Cytoplasm</keyword>
<keyword id="KW-0269">Exonuclease</keyword>
<keyword id="KW-0378">Hydrolase</keyword>
<keyword id="KW-0540">Nuclease</keyword>
<keyword id="KW-1185">Reference proteome</keyword>
<protein>
    <recommendedName>
        <fullName evidence="1">Exodeoxyribonuclease 7 small subunit</fullName>
        <ecNumber evidence="1">3.1.11.6</ecNumber>
    </recommendedName>
    <alternativeName>
        <fullName evidence="1">Exodeoxyribonuclease VII small subunit</fullName>
        <shortName evidence="1">Exonuclease VII small subunit</shortName>
    </alternativeName>
</protein>
<reference key="1">
    <citation type="submission" date="2003-06" db="EMBL/GenBank/DDBJ databases">
        <title>The complete genome sequence of Haemophilus ducreyi.</title>
        <authorList>
            <person name="Munson R.S. Jr."/>
            <person name="Ray W.C."/>
            <person name="Mahairas G."/>
            <person name="Sabo P."/>
            <person name="Mungur R."/>
            <person name="Johnson L."/>
            <person name="Nguyen D."/>
            <person name="Wang J."/>
            <person name="Forst C."/>
            <person name="Hood L."/>
        </authorList>
    </citation>
    <scope>NUCLEOTIDE SEQUENCE [LARGE SCALE GENOMIC DNA]</scope>
    <source>
        <strain>35000HP / ATCC 700724</strain>
    </source>
</reference>
<comment type="function">
    <text evidence="1">Bidirectionally degrades single-stranded DNA into large acid-insoluble oligonucleotides, which are then degraded further into small acid-soluble oligonucleotides.</text>
</comment>
<comment type="catalytic activity">
    <reaction evidence="1">
        <text>Exonucleolytic cleavage in either 5'- to 3'- or 3'- to 5'-direction to yield nucleoside 5'-phosphates.</text>
        <dbReference type="EC" id="3.1.11.6"/>
    </reaction>
</comment>
<comment type="subunit">
    <text evidence="1">Heterooligomer composed of large and small subunits.</text>
</comment>
<comment type="subcellular location">
    <subcellularLocation>
        <location evidence="1">Cytoplasm</location>
    </subcellularLocation>
</comment>
<comment type="similarity">
    <text evidence="1">Belongs to the XseB family.</text>
</comment>
<gene>
    <name evidence="1" type="primary">xseB</name>
    <name type="ordered locus">HD_1323</name>
</gene>
<feature type="chain" id="PRO_0000206952" description="Exodeoxyribonuclease 7 small subunit">
    <location>
        <begin position="1"/>
        <end position="74"/>
    </location>
</feature>
<dbReference type="EC" id="3.1.11.6" evidence="1"/>
<dbReference type="EMBL" id="AE017143">
    <property type="protein sequence ID" value="AAP96144.1"/>
    <property type="molecule type" value="Genomic_DNA"/>
</dbReference>
<dbReference type="RefSeq" id="WP_010945193.1">
    <property type="nucleotide sequence ID" value="NC_002940.2"/>
</dbReference>
<dbReference type="SMR" id="Q7VLU0"/>
<dbReference type="STRING" id="233412.HD_1323"/>
<dbReference type="GeneID" id="60732689"/>
<dbReference type="KEGG" id="hdu:HD_1323"/>
<dbReference type="eggNOG" id="COG1722">
    <property type="taxonomic scope" value="Bacteria"/>
</dbReference>
<dbReference type="HOGENOM" id="CLU_145918_3_3_6"/>
<dbReference type="OrthoDB" id="5591562at2"/>
<dbReference type="Proteomes" id="UP000001022">
    <property type="component" value="Chromosome"/>
</dbReference>
<dbReference type="GO" id="GO:0005829">
    <property type="term" value="C:cytosol"/>
    <property type="evidence" value="ECO:0007669"/>
    <property type="project" value="TreeGrafter"/>
</dbReference>
<dbReference type="GO" id="GO:0009318">
    <property type="term" value="C:exodeoxyribonuclease VII complex"/>
    <property type="evidence" value="ECO:0007669"/>
    <property type="project" value="InterPro"/>
</dbReference>
<dbReference type="GO" id="GO:0008855">
    <property type="term" value="F:exodeoxyribonuclease VII activity"/>
    <property type="evidence" value="ECO:0007669"/>
    <property type="project" value="UniProtKB-UniRule"/>
</dbReference>
<dbReference type="GO" id="GO:0006308">
    <property type="term" value="P:DNA catabolic process"/>
    <property type="evidence" value="ECO:0007669"/>
    <property type="project" value="UniProtKB-UniRule"/>
</dbReference>
<dbReference type="Gene3D" id="1.10.287.1040">
    <property type="entry name" value="Exonuclease VII, small subunit"/>
    <property type="match status" value="1"/>
</dbReference>
<dbReference type="HAMAP" id="MF_00337">
    <property type="entry name" value="Exonuc_7_S"/>
    <property type="match status" value="1"/>
</dbReference>
<dbReference type="InterPro" id="IPR003761">
    <property type="entry name" value="Exonuc_VII_S"/>
</dbReference>
<dbReference type="InterPro" id="IPR037004">
    <property type="entry name" value="Exonuc_VII_ssu_sf"/>
</dbReference>
<dbReference type="NCBIfam" id="NF002137">
    <property type="entry name" value="PRK00977.1-1"/>
    <property type="match status" value="1"/>
</dbReference>
<dbReference type="NCBIfam" id="NF002140">
    <property type="entry name" value="PRK00977.1-4"/>
    <property type="match status" value="1"/>
</dbReference>
<dbReference type="NCBIfam" id="TIGR01280">
    <property type="entry name" value="xseB"/>
    <property type="match status" value="1"/>
</dbReference>
<dbReference type="PANTHER" id="PTHR34137">
    <property type="entry name" value="EXODEOXYRIBONUCLEASE 7 SMALL SUBUNIT"/>
    <property type="match status" value="1"/>
</dbReference>
<dbReference type="PANTHER" id="PTHR34137:SF1">
    <property type="entry name" value="EXODEOXYRIBONUCLEASE 7 SMALL SUBUNIT"/>
    <property type="match status" value="1"/>
</dbReference>
<dbReference type="Pfam" id="PF02609">
    <property type="entry name" value="Exonuc_VII_S"/>
    <property type="match status" value="1"/>
</dbReference>
<dbReference type="PIRSF" id="PIRSF006488">
    <property type="entry name" value="Exonuc_VII_S"/>
    <property type="match status" value="1"/>
</dbReference>
<dbReference type="SUPFAM" id="SSF116842">
    <property type="entry name" value="XseB-like"/>
    <property type="match status" value="1"/>
</dbReference>
<evidence type="ECO:0000255" key="1">
    <source>
        <dbReference type="HAMAP-Rule" id="MF_00337"/>
    </source>
</evidence>
<accession>Q7VLU0</accession>